<organism>
    <name type="scientific">Legionella pneumophila</name>
    <dbReference type="NCBI Taxonomy" id="446"/>
    <lineage>
        <taxon>Bacteria</taxon>
        <taxon>Pseudomonadati</taxon>
        <taxon>Pseudomonadota</taxon>
        <taxon>Gammaproteobacteria</taxon>
        <taxon>Legionellales</taxon>
        <taxon>Legionellaceae</taxon>
        <taxon>Legionella</taxon>
    </lineage>
</organism>
<proteinExistence type="inferred from homology"/>
<protein>
    <recommendedName>
        <fullName evidence="1">Glucose-6-phosphate isomerase</fullName>
        <shortName evidence="1">GPI</shortName>
        <ecNumber evidence="1">5.3.1.9</ecNumber>
    </recommendedName>
    <alternativeName>
        <fullName evidence="1">Phosphoglucose isomerase</fullName>
        <shortName evidence="1">PGI</shortName>
    </alternativeName>
    <alternativeName>
        <fullName evidence="1">Phosphohexose isomerase</fullName>
        <shortName evidence="1">PHI</shortName>
    </alternativeName>
</protein>
<sequence length="497" mass="56092">MIRNSMKSHTELLSWNLLQKEADRVRLNSDSLTCVVPDSNNYESSKQINCIEYDYSRQRVNRTIIDLLIDLANEVKLQEKIDNLINGKKINISENRPALHTALRDLGNKSIMIDGLDIMSAVINTREKIKVISNQIREKKWLGHSGLPITDIVNIGIGGSDLGPRVCINALSNYISKEFNYHFISDVDPASFNDVIAKINPQTTLFIVSSKSFTTKETLLNARKAFALYEDTASIDQHFIAVTAHPERAYQMGIKTVLPIWDWVGGRFSFCSAVNLITAIAIGYEQFVELLAGAHDIDTHVQFTDFKNNIPVLMALIGIWNNNFLNIHYDLIGYNFKEYFVPYVQQLDMESNGKSIDVNGRMVDYATGPIVWGGLGNQAQHSYFQLLCQGTHRCVGDFITLKTNDEHEINSMCHYKMKVLSEGIQTIENPYGYIPGNMPMNHLILSDCSPYTLGALVALYEHKIFEQSVIWNINPFDQPGIESAKSAHREITLSSES</sequence>
<dbReference type="EC" id="5.3.1.9" evidence="1"/>
<dbReference type="EMBL" id="AJ007311">
    <property type="protein sequence ID" value="CAB65205.1"/>
    <property type="molecule type" value="Genomic_DNA"/>
</dbReference>
<dbReference type="SMR" id="Q9RDY2"/>
<dbReference type="STRING" id="91892.BIZ52_04115"/>
<dbReference type="eggNOG" id="COG0166">
    <property type="taxonomic scope" value="Bacteria"/>
</dbReference>
<dbReference type="UniPathway" id="UPA00109">
    <property type="reaction ID" value="UER00181"/>
</dbReference>
<dbReference type="UniPathway" id="UPA00138"/>
<dbReference type="GO" id="GO:0005829">
    <property type="term" value="C:cytosol"/>
    <property type="evidence" value="ECO:0007669"/>
    <property type="project" value="TreeGrafter"/>
</dbReference>
<dbReference type="GO" id="GO:0097367">
    <property type="term" value="F:carbohydrate derivative binding"/>
    <property type="evidence" value="ECO:0007669"/>
    <property type="project" value="InterPro"/>
</dbReference>
<dbReference type="GO" id="GO:0004347">
    <property type="term" value="F:glucose-6-phosphate isomerase activity"/>
    <property type="evidence" value="ECO:0007669"/>
    <property type="project" value="UniProtKB-UniRule"/>
</dbReference>
<dbReference type="GO" id="GO:0048029">
    <property type="term" value="F:monosaccharide binding"/>
    <property type="evidence" value="ECO:0007669"/>
    <property type="project" value="TreeGrafter"/>
</dbReference>
<dbReference type="GO" id="GO:0006094">
    <property type="term" value="P:gluconeogenesis"/>
    <property type="evidence" value="ECO:0007669"/>
    <property type="project" value="UniProtKB-UniRule"/>
</dbReference>
<dbReference type="GO" id="GO:0051156">
    <property type="term" value="P:glucose 6-phosphate metabolic process"/>
    <property type="evidence" value="ECO:0007669"/>
    <property type="project" value="TreeGrafter"/>
</dbReference>
<dbReference type="GO" id="GO:0006096">
    <property type="term" value="P:glycolytic process"/>
    <property type="evidence" value="ECO:0007669"/>
    <property type="project" value="UniProtKB-UniRule"/>
</dbReference>
<dbReference type="CDD" id="cd05015">
    <property type="entry name" value="SIS_PGI_1"/>
    <property type="match status" value="1"/>
</dbReference>
<dbReference type="CDD" id="cd05016">
    <property type="entry name" value="SIS_PGI_2"/>
    <property type="match status" value="1"/>
</dbReference>
<dbReference type="Gene3D" id="3.40.50.10490">
    <property type="entry name" value="Glucose-6-phosphate isomerase like protein, domain 1"/>
    <property type="match status" value="2"/>
</dbReference>
<dbReference type="HAMAP" id="MF_00473">
    <property type="entry name" value="G6P_isomerase"/>
    <property type="match status" value="1"/>
</dbReference>
<dbReference type="InterPro" id="IPR001672">
    <property type="entry name" value="G6P_Isomerase"/>
</dbReference>
<dbReference type="InterPro" id="IPR018189">
    <property type="entry name" value="Phosphoglucose_isomerase_CS"/>
</dbReference>
<dbReference type="InterPro" id="IPR046348">
    <property type="entry name" value="SIS_dom_sf"/>
</dbReference>
<dbReference type="InterPro" id="IPR035476">
    <property type="entry name" value="SIS_PGI_1"/>
</dbReference>
<dbReference type="InterPro" id="IPR035482">
    <property type="entry name" value="SIS_PGI_2"/>
</dbReference>
<dbReference type="NCBIfam" id="NF001211">
    <property type="entry name" value="PRK00179.1"/>
    <property type="match status" value="1"/>
</dbReference>
<dbReference type="PANTHER" id="PTHR11469">
    <property type="entry name" value="GLUCOSE-6-PHOSPHATE ISOMERASE"/>
    <property type="match status" value="1"/>
</dbReference>
<dbReference type="PANTHER" id="PTHR11469:SF1">
    <property type="entry name" value="GLUCOSE-6-PHOSPHATE ISOMERASE"/>
    <property type="match status" value="1"/>
</dbReference>
<dbReference type="Pfam" id="PF00342">
    <property type="entry name" value="PGI"/>
    <property type="match status" value="1"/>
</dbReference>
<dbReference type="PRINTS" id="PR00662">
    <property type="entry name" value="G6PISOMERASE"/>
</dbReference>
<dbReference type="SUPFAM" id="SSF53697">
    <property type="entry name" value="SIS domain"/>
    <property type="match status" value="1"/>
</dbReference>
<dbReference type="PROSITE" id="PS00765">
    <property type="entry name" value="P_GLUCOSE_ISOMERASE_1"/>
    <property type="match status" value="1"/>
</dbReference>
<dbReference type="PROSITE" id="PS00174">
    <property type="entry name" value="P_GLUCOSE_ISOMERASE_2"/>
    <property type="match status" value="1"/>
</dbReference>
<dbReference type="PROSITE" id="PS51463">
    <property type="entry name" value="P_GLUCOSE_ISOMERASE_3"/>
    <property type="match status" value="1"/>
</dbReference>
<keyword id="KW-0963">Cytoplasm</keyword>
<keyword id="KW-0312">Gluconeogenesis</keyword>
<keyword id="KW-0324">Glycolysis</keyword>
<keyword id="KW-0413">Isomerase</keyword>
<comment type="function">
    <text evidence="1">Catalyzes the reversible isomerization of glucose-6-phosphate to fructose-6-phosphate.</text>
</comment>
<comment type="catalytic activity">
    <reaction evidence="1">
        <text>alpha-D-glucose 6-phosphate = beta-D-fructose 6-phosphate</text>
        <dbReference type="Rhea" id="RHEA:11816"/>
        <dbReference type="ChEBI" id="CHEBI:57634"/>
        <dbReference type="ChEBI" id="CHEBI:58225"/>
        <dbReference type="EC" id="5.3.1.9"/>
    </reaction>
</comment>
<comment type="pathway">
    <text evidence="1">Carbohydrate biosynthesis; gluconeogenesis.</text>
</comment>
<comment type="pathway">
    <text evidence="1">Carbohydrate degradation; glycolysis; D-glyceraldehyde 3-phosphate and glycerone phosphate from D-glucose: step 2/4.</text>
</comment>
<comment type="subcellular location">
    <subcellularLocation>
        <location evidence="1">Cytoplasm</location>
    </subcellularLocation>
</comment>
<comment type="similarity">
    <text evidence="1 2">Belongs to the GPI family.</text>
</comment>
<feature type="chain" id="PRO_0000180661" description="Glucose-6-phosphate isomerase">
    <location>
        <begin position="1"/>
        <end position="497"/>
    </location>
</feature>
<feature type="active site" description="Proton donor" evidence="1">
    <location>
        <position position="350"/>
    </location>
</feature>
<feature type="active site" evidence="1">
    <location>
        <position position="381"/>
    </location>
</feature>
<feature type="active site" evidence="1">
    <location>
        <position position="485"/>
    </location>
</feature>
<accession>Q9RDY2</accession>
<name>G6PI_LEGPN</name>
<evidence type="ECO:0000255" key="1">
    <source>
        <dbReference type="HAMAP-Rule" id="MF_00473"/>
    </source>
</evidence>
<evidence type="ECO:0000305" key="2"/>
<reference key="1">
    <citation type="journal article" date="2000" name="Int. J. Med. Microbiol.">
        <title>Cloning and functional characterization of a 30 kb gene locus required for lipopolysaccharide biosynthesis in Legionella pneumophila.</title>
        <authorList>
            <person name="Lueneberg E."/>
            <person name="Zetzmann N."/>
            <person name="Hartmann M."/>
            <person name="Knirel Y.A."/>
            <person name="Kooistra O."/>
            <person name="Zaehringer U."/>
            <person name="Helbig J."/>
            <person name="Frosch M."/>
        </authorList>
    </citation>
    <scope>NUCLEOTIDE SEQUENCE [GENOMIC DNA]</scope>
    <source>
        <strain>ATCC 43109 / NCTC 12008 / RC1 / Olda / Serogroup 1</strain>
    </source>
</reference>
<gene>
    <name evidence="1" type="primary">pgi</name>
    <name type="synonym">gpi</name>
</gene>